<feature type="chain" id="PRO_0000205396" description="cAMP-dependent protein kinase type I regulatory subunit">
    <location>
        <begin position="1"/>
        <end position="376"/>
    </location>
</feature>
<feature type="region of interest" description="Dimerization and phosphorylation">
    <location>
        <begin position="1"/>
        <end position="131"/>
    </location>
</feature>
<feature type="region of interest" description="Disordered" evidence="2">
    <location>
        <begin position="72"/>
        <end position="93"/>
    </location>
</feature>
<feature type="short sequence motif" description="Pseudophosphorylation motif">
    <location>
        <begin position="91"/>
        <end position="95"/>
    </location>
</feature>
<feature type="binding site">
    <location>
        <begin position="132"/>
        <end position="247"/>
    </location>
    <ligand>
        <name>3',5'-cyclic AMP</name>
        <dbReference type="ChEBI" id="CHEBI:58165"/>
        <label>1</label>
    </ligand>
</feature>
<feature type="binding site">
    <location>
        <position position="197"/>
    </location>
    <ligand>
        <name>3',5'-cyclic AMP</name>
        <dbReference type="ChEBI" id="CHEBI:58165"/>
        <label>1</label>
    </ligand>
</feature>
<feature type="binding site">
    <location>
        <position position="206"/>
    </location>
    <ligand>
        <name>3',5'-cyclic AMP</name>
        <dbReference type="ChEBI" id="CHEBI:58165"/>
        <label>1</label>
    </ligand>
</feature>
<feature type="binding site">
    <location>
        <begin position="250"/>
        <end position="371"/>
    </location>
    <ligand>
        <name>3',5'-cyclic AMP</name>
        <dbReference type="ChEBI" id="CHEBI:58165"/>
        <label>2</label>
    </ligand>
</feature>
<feature type="binding site">
    <location>
        <position position="321"/>
    </location>
    <ligand>
        <name>3',5'-cyclic AMP</name>
        <dbReference type="ChEBI" id="CHEBI:58165"/>
        <label>2</label>
    </ligand>
</feature>
<feature type="binding site">
    <location>
        <position position="330"/>
    </location>
    <ligand>
        <name>3',5'-cyclic AMP</name>
        <dbReference type="ChEBI" id="CHEBI:58165"/>
        <label>2</label>
    </ligand>
</feature>
<feature type="modified residue" description="Phosphoserine" evidence="1">
    <location>
        <position position="96"/>
    </location>
</feature>
<feature type="disulfide bond" description="Interchain (with C-38)" evidence="1">
    <location>
        <position position="17"/>
    </location>
</feature>
<feature type="disulfide bond" description="Interchain (with C-17)" evidence="1">
    <location>
        <position position="38"/>
    </location>
</feature>
<feature type="splice variant" id="VSP_002796" description="In isoform 3." evidence="3">
    <location>
        <begin position="1"/>
        <end position="80"/>
    </location>
</feature>
<feature type="splice variant" id="VSP_002795" description="In isoform 2." evidence="3">
    <original>MSYMMAKTLEEQSLRECEHYIQTHGIQRVLKDCIVQLCVCRPENPVQFLRQYFQKLER</original>
    <variation>MPK</variation>
    <location>
        <begin position="1"/>
        <end position="58"/>
    </location>
</feature>
<feature type="splice variant" id="VSP_036066" description="In isoform E." evidence="4">
    <location>
        <begin position="2"/>
        <end position="58"/>
    </location>
</feature>
<feature type="sequence conflict" description="In Ref. 1; CAA34837/CAA34838/CAA34839/CAA34841." evidence="4" ref="1">
    <original>E</original>
    <variation>EQ</variation>
    <location>
        <position position="303"/>
    </location>
</feature>
<feature type="sequence conflict" description="In Ref. 1; CAA34837." evidence="4" ref="1">
    <original>MPK</original>
    <variation>M</variation>
    <location sequence="P16905-2">
        <begin position="1"/>
        <end position="3"/>
    </location>
</feature>
<evidence type="ECO:0000250" key="1"/>
<evidence type="ECO:0000256" key="2">
    <source>
        <dbReference type="SAM" id="MobiDB-lite"/>
    </source>
</evidence>
<evidence type="ECO:0000303" key="3">
    <source>
    </source>
</evidence>
<evidence type="ECO:0000305" key="4"/>
<proteinExistence type="evidence at protein level"/>
<comment type="subunit">
    <text>Tetramer, composed of 2 regulatory (R) and 2 catalytic (C) subunits. In the presence of cAMP it dissociates into 2 active monomeric C subunits and an R dimer.</text>
</comment>
<comment type="interaction">
    <interactant intactId="EBI-263057">
        <id>P16905</id>
    </interactant>
    <interactant intactId="EBI-15108291">
        <id>Q9VRY7</id>
        <label>Rsph3</label>
    </interactant>
    <organismsDiffer>false</organismsDiffer>
    <experiments>4</experiments>
</comment>
<comment type="alternative products">
    <event type="alternative splicing"/>
    <isoform>
        <id>P16905-1</id>
        <name>1</name>
        <name>DRI-1</name>
        <name>A</name>
        <name>C</name>
        <name>G</name>
        <name>H</name>
        <name>I</name>
        <name>J</name>
        <sequence type="displayed"/>
    </isoform>
    <isoform>
        <id>P16905-2</id>
        <name>2</name>
        <name>DRI-2</name>
        <name>D</name>
        <sequence type="described" ref="VSP_002795"/>
    </isoform>
    <isoform>
        <id>P16905-3</id>
        <name>3</name>
        <name>DRI-3-4</name>
        <name>B</name>
        <name>F</name>
        <sequence type="described" ref="VSP_002796"/>
    </isoform>
    <isoform>
        <id>P16905-4</id>
        <name>E</name>
        <sequence type="described" ref="VSP_036066"/>
    </isoform>
</comment>
<comment type="PTM">
    <text>The pseudophosphorylation site binds to the substrate-binding region of the catalytic chain but is not phosphorylated. The physiological significance of phosphorylations by other kinases is unclear.</text>
</comment>
<comment type="similarity">
    <text evidence="4">Belongs to the cAMP-dependent kinase regulatory chain family.</text>
</comment>
<comment type="sequence caution" evidence="4">
    <conflict type="frameshift">
        <sequence resource="EMBL-CDS" id="AAN71433"/>
    </conflict>
</comment>
<reference key="1">
    <citation type="journal article" date="1988" name="Genes Dev.">
        <title>Isolation and characterization of Drosophila cAMP-dependent protein kinase genes.</title>
        <authorList>
            <person name="Kalderon D."/>
            <person name="Rubin G.M."/>
        </authorList>
    </citation>
    <scope>NUCLEOTIDE SEQUENCE [GENOMIC DNA]</scope>
    <scope>ALTERNATIVE SPLICING (ISOFORMS 1; 2 AND 3)</scope>
    <source>
        <strain>Canton-S</strain>
    </source>
</reference>
<reference key="2">
    <citation type="journal article" date="2000" name="Science">
        <title>The genome sequence of Drosophila melanogaster.</title>
        <authorList>
            <person name="Adams M.D."/>
            <person name="Celniker S.E."/>
            <person name="Holt R.A."/>
            <person name="Evans C.A."/>
            <person name="Gocayne J.D."/>
            <person name="Amanatides P.G."/>
            <person name="Scherer S.E."/>
            <person name="Li P.W."/>
            <person name="Hoskins R.A."/>
            <person name="Galle R.F."/>
            <person name="George R.A."/>
            <person name="Lewis S.E."/>
            <person name="Richards S."/>
            <person name="Ashburner M."/>
            <person name="Henderson S.N."/>
            <person name="Sutton G.G."/>
            <person name="Wortman J.R."/>
            <person name="Yandell M.D."/>
            <person name="Zhang Q."/>
            <person name="Chen L.X."/>
            <person name="Brandon R.C."/>
            <person name="Rogers Y.-H.C."/>
            <person name="Blazej R.G."/>
            <person name="Champe M."/>
            <person name="Pfeiffer B.D."/>
            <person name="Wan K.H."/>
            <person name="Doyle C."/>
            <person name="Baxter E.G."/>
            <person name="Helt G."/>
            <person name="Nelson C.R."/>
            <person name="Miklos G.L.G."/>
            <person name="Abril J.F."/>
            <person name="Agbayani A."/>
            <person name="An H.-J."/>
            <person name="Andrews-Pfannkoch C."/>
            <person name="Baldwin D."/>
            <person name="Ballew R.M."/>
            <person name="Basu A."/>
            <person name="Baxendale J."/>
            <person name="Bayraktaroglu L."/>
            <person name="Beasley E.M."/>
            <person name="Beeson K.Y."/>
            <person name="Benos P.V."/>
            <person name="Berman B.P."/>
            <person name="Bhandari D."/>
            <person name="Bolshakov S."/>
            <person name="Borkova D."/>
            <person name="Botchan M.R."/>
            <person name="Bouck J."/>
            <person name="Brokstein P."/>
            <person name="Brottier P."/>
            <person name="Burtis K.C."/>
            <person name="Busam D.A."/>
            <person name="Butler H."/>
            <person name="Cadieu E."/>
            <person name="Center A."/>
            <person name="Chandra I."/>
            <person name="Cherry J.M."/>
            <person name="Cawley S."/>
            <person name="Dahlke C."/>
            <person name="Davenport L.B."/>
            <person name="Davies P."/>
            <person name="de Pablos B."/>
            <person name="Delcher A."/>
            <person name="Deng Z."/>
            <person name="Mays A.D."/>
            <person name="Dew I."/>
            <person name="Dietz S.M."/>
            <person name="Dodson K."/>
            <person name="Doup L.E."/>
            <person name="Downes M."/>
            <person name="Dugan-Rocha S."/>
            <person name="Dunkov B.C."/>
            <person name="Dunn P."/>
            <person name="Durbin K.J."/>
            <person name="Evangelista C.C."/>
            <person name="Ferraz C."/>
            <person name="Ferriera S."/>
            <person name="Fleischmann W."/>
            <person name="Fosler C."/>
            <person name="Gabrielian A.E."/>
            <person name="Garg N.S."/>
            <person name="Gelbart W.M."/>
            <person name="Glasser K."/>
            <person name="Glodek A."/>
            <person name="Gong F."/>
            <person name="Gorrell J.H."/>
            <person name="Gu Z."/>
            <person name="Guan P."/>
            <person name="Harris M."/>
            <person name="Harris N.L."/>
            <person name="Harvey D.A."/>
            <person name="Heiman T.J."/>
            <person name="Hernandez J.R."/>
            <person name="Houck J."/>
            <person name="Hostin D."/>
            <person name="Houston K.A."/>
            <person name="Howland T.J."/>
            <person name="Wei M.-H."/>
            <person name="Ibegwam C."/>
            <person name="Jalali M."/>
            <person name="Kalush F."/>
            <person name="Karpen G.H."/>
            <person name="Ke Z."/>
            <person name="Kennison J.A."/>
            <person name="Ketchum K.A."/>
            <person name="Kimmel B.E."/>
            <person name="Kodira C.D."/>
            <person name="Kraft C.L."/>
            <person name="Kravitz S."/>
            <person name="Kulp D."/>
            <person name="Lai Z."/>
            <person name="Lasko P."/>
            <person name="Lei Y."/>
            <person name="Levitsky A.A."/>
            <person name="Li J.H."/>
            <person name="Li Z."/>
            <person name="Liang Y."/>
            <person name="Lin X."/>
            <person name="Liu X."/>
            <person name="Mattei B."/>
            <person name="McIntosh T.C."/>
            <person name="McLeod M.P."/>
            <person name="McPherson D."/>
            <person name="Merkulov G."/>
            <person name="Milshina N.V."/>
            <person name="Mobarry C."/>
            <person name="Morris J."/>
            <person name="Moshrefi A."/>
            <person name="Mount S.M."/>
            <person name="Moy M."/>
            <person name="Murphy B."/>
            <person name="Murphy L."/>
            <person name="Muzny D.M."/>
            <person name="Nelson D.L."/>
            <person name="Nelson D.R."/>
            <person name="Nelson K.A."/>
            <person name="Nixon K."/>
            <person name="Nusskern D.R."/>
            <person name="Pacleb J.M."/>
            <person name="Palazzolo M."/>
            <person name="Pittman G.S."/>
            <person name="Pan S."/>
            <person name="Pollard J."/>
            <person name="Puri V."/>
            <person name="Reese M.G."/>
            <person name="Reinert K."/>
            <person name="Remington K."/>
            <person name="Saunders R.D.C."/>
            <person name="Scheeler F."/>
            <person name="Shen H."/>
            <person name="Shue B.C."/>
            <person name="Siden-Kiamos I."/>
            <person name="Simpson M."/>
            <person name="Skupski M.P."/>
            <person name="Smith T.J."/>
            <person name="Spier E."/>
            <person name="Spradling A.C."/>
            <person name="Stapleton M."/>
            <person name="Strong R."/>
            <person name="Sun E."/>
            <person name="Svirskas R."/>
            <person name="Tector C."/>
            <person name="Turner R."/>
            <person name="Venter E."/>
            <person name="Wang A.H."/>
            <person name="Wang X."/>
            <person name="Wang Z.-Y."/>
            <person name="Wassarman D.A."/>
            <person name="Weinstock G.M."/>
            <person name="Weissenbach J."/>
            <person name="Williams S.M."/>
            <person name="Woodage T."/>
            <person name="Worley K.C."/>
            <person name="Wu D."/>
            <person name="Yang S."/>
            <person name="Yao Q.A."/>
            <person name="Ye J."/>
            <person name="Yeh R.-F."/>
            <person name="Zaveri J.S."/>
            <person name="Zhan M."/>
            <person name="Zhang G."/>
            <person name="Zhao Q."/>
            <person name="Zheng L."/>
            <person name="Zheng X.H."/>
            <person name="Zhong F.N."/>
            <person name="Zhong W."/>
            <person name="Zhou X."/>
            <person name="Zhu S.C."/>
            <person name="Zhu X."/>
            <person name="Smith H.O."/>
            <person name="Gibbs R.A."/>
            <person name="Myers E.W."/>
            <person name="Rubin G.M."/>
            <person name="Venter J.C."/>
        </authorList>
    </citation>
    <scope>NUCLEOTIDE SEQUENCE [LARGE SCALE GENOMIC DNA]</scope>
    <source>
        <strain>Berkeley</strain>
    </source>
</reference>
<reference key="3">
    <citation type="journal article" date="2002" name="Genome Biol.">
        <title>Annotation of the Drosophila melanogaster euchromatic genome: a systematic review.</title>
        <authorList>
            <person name="Misra S."/>
            <person name="Crosby M.A."/>
            <person name="Mungall C.J."/>
            <person name="Matthews B.B."/>
            <person name="Campbell K.S."/>
            <person name="Hradecky P."/>
            <person name="Huang Y."/>
            <person name="Kaminker J.S."/>
            <person name="Millburn G.H."/>
            <person name="Prochnik S.E."/>
            <person name="Smith C.D."/>
            <person name="Tupy J.L."/>
            <person name="Whitfield E.J."/>
            <person name="Bayraktaroglu L."/>
            <person name="Berman B.P."/>
            <person name="Bettencourt B.R."/>
            <person name="Celniker S.E."/>
            <person name="de Grey A.D.N.J."/>
            <person name="Drysdale R.A."/>
            <person name="Harris N.L."/>
            <person name="Richter J."/>
            <person name="Russo S."/>
            <person name="Schroeder A.J."/>
            <person name="Shu S.Q."/>
            <person name="Stapleton M."/>
            <person name="Yamada C."/>
            <person name="Ashburner M."/>
            <person name="Gelbart W.M."/>
            <person name="Rubin G.M."/>
            <person name="Lewis S.E."/>
        </authorList>
    </citation>
    <scope>GENOME REANNOTATION</scope>
    <scope>ALTERNATIVE SPLICING</scope>
    <source>
        <strain>Berkeley</strain>
    </source>
</reference>
<reference key="4">
    <citation type="journal article" date="2002" name="Genome Biol.">
        <title>A Drosophila full-length cDNA resource.</title>
        <authorList>
            <person name="Stapleton M."/>
            <person name="Carlson J.W."/>
            <person name="Brokstein P."/>
            <person name="Yu C."/>
            <person name="Champe M."/>
            <person name="George R.A."/>
            <person name="Guarin H."/>
            <person name="Kronmiller B."/>
            <person name="Pacleb J.M."/>
            <person name="Park S."/>
            <person name="Wan K.H."/>
            <person name="Rubin G.M."/>
            <person name="Celniker S.E."/>
        </authorList>
    </citation>
    <scope>NUCLEOTIDE SEQUENCE [LARGE SCALE MRNA] (ISOFORMS 1; 2 AND 3)</scope>
    <source>
        <strain>Berkeley</strain>
        <tissue>Embryo</tissue>
        <tissue>Head</tissue>
    </source>
</reference>
<accession>P16905</accession>
<accession>A4V272</accession>
<accession>A4V277</accession>
<accession>Q59E10</accession>
<accession>Q8IGP3</accession>
<accession>Q8IPU2</accession>
<accession>Q8MR47</accession>
<accession>Q95TK7</accession>
<accession>Q9VPA6</accession>
<organism>
    <name type="scientific">Drosophila melanogaster</name>
    <name type="common">Fruit fly</name>
    <dbReference type="NCBI Taxonomy" id="7227"/>
    <lineage>
        <taxon>Eukaryota</taxon>
        <taxon>Metazoa</taxon>
        <taxon>Ecdysozoa</taxon>
        <taxon>Arthropoda</taxon>
        <taxon>Hexapoda</taxon>
        <taxon>Insecta</taxon>
        <taxon>Pterygota</taxon>
        <taxon>Neoptera</taxon>
        <taxon>Endopterygota</taxon>
        <taxon>Diptera</taxon>
        <taxon>Brachycera</taxon>
        <taxon>Muscomorpha</taxon>
        <taxon>Ephydroidea</taxon>
        <taxon>Drosophilidae</taxon>
        <taxon>Drosophila</taxon>
        <taxon>Sophophora</taxon>
    </lineage>
</organism>
<name>KAPR1_DROME</name>
<protein>
    <recommendedName>
        <fullName>cAMP-dependent protein kinase type I regulatory subunit</fullName>
        <shortName>DRI class I to class IV</shortName>
    </recommendedName>
</protein>
<sequence>MSYMMAKTLEEQSLRECEHYIQTHGIQRVLKDCIVQLCVCRPENPVQFLRQYFQKLEREQVKLDASRQVISPDDCEDLSPMPQTAAPPVRRRGGISAEPVTEEDATNYVKKVVPKDYKTMNALSKAIAKNVLFAHLDESERSDIFDAMFPVNHIAGENIIQQGDEGDNFYVIDVGEVDVFVNSELVTTISEGGSFGELALIYGTPRAATVRAKTDVKLWGIDRDSYRRILMGSTIRKRKMYEEFLSRVSILESLDKWERLTVADSLETCSFDDGETIVKQGAAGDDFYIILEGCAVVLQQRSEGEDPAEVGRLGSSDYFGEIALLLDRPRAATVVARGPLKCVKLDRARFERVLGPCADILKRNITQYNSFVSLSV</sequence>
<gene>
    <name type="primary">Pka-R1</name>
    <name type="synonym">CdkR</name>
    <name type="ORF">CG3263</name>
</gene>
<keyword id="KW-0025">Alternative splicing</keyword>
<keyword id="KW-0114">cAMP</keyword>
<keyword id="KW-0116">cAMP-binding</keyword>
<keyword id="KW-1015">Disulfide bond</keyword>
<keyword id="KW-0547">Nucleotide-binding</keyword>
<keyword id="KW-0597">Phosphoprotein</keyword>
<keyword id="KW-1185">Reference proteome</keyword>
<keyword id="KW-0677">Repeat</keyword>
<dbReference type="EMBL" id="X16963">
    <property type="protein sequence ID" value="CAA34837.1"/>
    <property type="molecule type" value="Genomic_DNA"/>
</dbReference>
<dbReference type="EMBL" id="X16964">
    <property type="protein sequence ID" value="CAA34837.1"/>
    <property type="status" value="JOINED"/>
    <property type="molecule type" value="Genomic_DNA"/>
</dbReference>
<dbReference type="EMBL" id="X16970">
    <property type="protein sequence ID" value="CAA34841.1"/>
    <property type="molecule type" value="Genomic_DNA"/>
</dbReference>
<dbReference type="EMBL" id="X16971">
    <property type="protein sequence ID" value="CAA34841.1"/>
    <property type="status" value="JOINED"/>
    <property type="molecule type" value="Genomic_DNA"/>
</dbReference>
<dbReference type="EMBL" id="X16966">
    <property type="protein sequence ID" value="CAA34838.1"/>
    <property type="molecule type" value="Genomic_DNA"/>
</dbReference>
<dbReference type="EMBL" id="X16968">
    <property type="protein sequence ID" value="CAA34839.1"/>
    <property type="molecule type" value="Genomic_DNA"/>
</dbReference>
<dbReference type="EMBL" id="AE014296">
    <property type="protein sequence ID" value="AAF51649.3"/>
    <property type="molecule type" value="Genomic_DNA"/>
</dbReference>
<dbReference type="EMBL" id="AE014296">
    <property type="protein sequence ID" value="AAG22179.2"/>
    <property type="molecule type" value="Genomic_DNA"/>
</dbReference>
<dbReference type="EMBL" id="AE014296">
    <property type="protein sequence ID" value="AAN12146.2"/>
    <property type="molecule type" value="Genomic_DNA"/>
</dbReference>
<dbReference type="EMBL" id="AE014296">
    <property type="protein sequence ID" value="AAN12147.1"/>
    <property type="molecule type" value="Genomic_DNA"/>
</dbReference>
<dbReference type="EMBL" id="AE014296">
    <property type="protein sequence ID" value="AAX52761.1"/>
    <property type="molecule type" value="Genomic_DNA"/>
</dbReference>
<dbReference type="EMBL" id="AE014296">
    <property type="protein sequence ID" value="AAX52762.1"/>
    <property type="molecule type" value="Genomic_DNA"/>
</dbReference>
<dbReference type="EMBL" id="AE014296">
    <property type="protein sequence ID" value="AAX52763.1"/>
    <property type="molecule type" value="Genomic_DNA"/>
</dbReference>
<dbReference type="EMBL" id="AE014296">
    <property type="protein sequence ID" value="AAX52764.1"/>
    <property type="molecule type" value="Genomic_DNA"/>
</dbReference>
<dbReference type="EMBL" id="AE014296">
    <property type="protein sequence ID" value="AAX52765.1"/>
    <property type="molecule type" value="Genomic_DNA"/>
</dbReference>
<dbReference type="EMBL" id="AE014296">
    <property type="protein sequence ID" value="AAX52766.1"/>
    <property type="molecule type" value="Genomic_DNA"/>
</dbReference>
<dbReference type="EMBL" id="AY058709">
    <property type="protein sequence ID" value="AAL13938.1"/>
    <property type="molecule type" value="mRNA"/>
</dbReference>
<dbReference type="EMBL" id="AY122131">
    <property type="protein sequence ID" value="AAM52643.1"/>
    <property type="molecule type" value="mRNA"/>
</dbReference>
<dbReference type="EMBL" id="BT001678">
    <property type="protein sequence ID" value="AAN71433.1"/>
    <property type="status" value="ALT_FRAME"/>
    <property type="molecule type" value="mRNA"/>
</dbReference>
<dbReference type="PIR" id="A31751">
    <property type="entry name" value="OKFF1R"/>
</dbReference>
<dbReference type="RefSeq" id="NP_001014593.1">
    <molecule id="P16905-1"/>
    <property type="nucleotide sequence ID" value="NM_001014593.3"/>
</dbReference>
<dbReference type="RefSeq" id="NP_001014594.1">
    <molecule id="P16905-1"/>
    <property type="nucleotide sequence ID" value="NM_001014594.3"/>
</dbReference>
<dbReference type="RefSeq" id="NP_001014595.1">
    <molecule id="P16905-1"/>
    <property type="nucleotide sequence ID" value="NM_001014595.3"/>
</dbReference>
<dbReference type="RefSeq" id="NP_001014596.1">
    <molecule id="P16905-1"/>
    <property type="nucleotide sequence ID" value="NM_001014596.3"/>
</dbReference>
<dbReference type="RefSeq" id="NP_001014597.1">
    <molecule id="P16905-3"/>
    <property type="nucleotide sequence ID" value="NM_001014597.2"/>
</dbReference>
<dbReference type="RefSeq" id="NP_001014598.1">
    <molecule id="P16905-4"/>
    <property type="nucleotide sequence ID" value="NM_001014598.2"/>
</dbReference>
<dbReference type="RefSeq" id="NP_001189145.1">
    <property type="nucleotide sequence ID" value="NM_001202216.1"/>
</dbReference>
<dbReference type="RefSeq" id="NP_001189146.1">
    <property type="nucleotide sequence ID" value="NM_001202217.1"/>
</dbReference>
<dbReference type="RefSeq" id="NP_001189147.1">
    <property type="nucleotide sequence ID" value="NM_001202218.2"/>
</dbReference>
<dbReference type="RefSeq" id="NP_001189148.1">
    <property type="nucleotide sequence ID" value="NM_001202219.2"/>
</dbReference>
<dbReference type="RefSeq" id="NP_001189149.1">
    <property type="nucleotide sequence ID" value="NM_001202220.2"/>
</dbReference>
<dbReference type="RefSeq" id="NP_524189.2">
    <molecule id="P16905-3"/>
    <property type="nucleotide sequence ID" value="NM_079465.4"/>
</dbReference>
<dbReference type="RefSeq" id="NP_730573.2">
    <molecule id="P16905-1"/>
    <property type="nucleotide sequence ID" value="NM_168875.4"/>
</dbReference>
<dbReference type="RefSeq" id="NP_730574.2">
    <molecule id="P16905-1"/>
    <property type="nucleotide sequence ID" value="NM_168876.6"/>
</dbReference>
<dbReference type="RefSeq" id="NP_730576.1">
    <molecule id="P16905-2"/>
    <property type="nucleotide sequence ID" value="NM_168877.2"/>
</dbReference>
<dbReference type="SMR" id="P16905"/>
<dbReference type="BioGRID" id="65562">
    <property type="interactions" value="25"/>
</dbReference>
<dbReference type="DIP" id="DIP-23282N"/>
<dbReference type="FunCoup" id="P16905">
    <property type="interactions" value="1034"/>
</dbReference>
<dbReference type="IntAct" id="P16905">
    <property type="interactions" value="14"/>
</dbReference>
<dbReference type="STRING" id="7227.FBpp0291777"/>
<dbReference type="PaxDb" id="7227-FBpp0291777"/>
<dbReference type="DNASU" id="40305"/>
<dbReference type="EnsemblMetazoa" id="FBtr0299891">
    <molecule id="P16905-1"/>
    <property type="protein sequence ID" value="FBpp0289169"/>
    <property type="gene ID" value="FBgn0259243"/>
</dbReference>
<dbReference type="EnsemblMetazoa" id="FBtr0299892">
    <molecule id="P16905-1"/>
    <property type="protein sequence ID" value="FBpp0289170"/>
    <property type="gene ID" value="FBgn0259243"/>
</dbReference>
<dbReference type="EnsemblMetazoa" id="FBtr0300528">
    <molecule id="P16905-1"/>
    <property type="protein sequence ID" value="FBpp0289755"/>
    <property type="gene ID" value="FBgn0259243"/>
</dbReference>
<dbReference type="EnsemblMetazoa" id="FBtr0300529">
    <molecule id="P16905-3"/>
    <property type="protein sequence ID" value="FBpp0289756"/>
    <property type="gene ID" value="FBgn0259243"/>
</dbReference>
<dbReference type="EnsemblMetazoa" id="FBtr0300530">
    <molecule id="P16905-1"/>
    <property type="protein sequence ID" value="FBpp0289757"/>
    <property type="gene ID" value="FBgn0259243"/>
</dbReference>
<dbReference type="EnsemblMetazoa" id="FBtr0300531">
    <molecule id="P16905-2"/>
    <property type="protein sequence ID" value="FBpp0289758"/>
    <property type="gene ID" value="FBgn0259243"/>
</dbReference>
<dbReference type="EnsemblMetazoa" id="FBtr0300532">
    <molecule id="P16905-4"/>
    <property type="protein sequence ID" value="FBpp0289759"/>
    <property type="gene ID" value="FBgn0259243"/>
</dbReference>
<dbReference type="EnsemblMetazoa" id="FBtr0300533">
    <molecule id="P16905-3"/>
    <property type="protein sequence ID" value="FBpp0289760"/>
    <property type="gene ID" value="FBgn0259243"/>
</dbReference>
<dbReference type="EnsemblMetazoa" id="FBtr0300534">
    <molecule id="P16905-1"/>
    <property type="protein sequence ID" value="FBpp0289761"/>
    <property type="gene ID" value="FBgn0259243"/>
</dbReference>
<dbReference type="EnsemblMetazoa" id="FBtr0300535">
    <molecule id="P16905-1"/>
    <property type="protein sequence ID" value="FBpp0289762"/>
    <property type="gene ID" value="FBgn0259243"/>
</dbReference>
<dbReference type="GeneID" id="40305"/>
<dbReference type="KEGG" id="dme:Dmel_CG42341"/>
<dbReference type="AGR" id="FB:FBgn0259243"/>
<dbReference type="CTD" id="40305"/>
<dbReference type="FlyBase" id="FBgn0259243">
    <property type="gene designation" value="Pka-R1"/>
</dbReference>
<dbReference type="VEuPathDB" id="VectorBase:FBgn0259243"/>
<dbReference type="eggNOG" id="KOG1113">
    <property type="taxonomic scope" value="Eukaryota"/>
</dbReference>
<dbReference type="GeneTree" id="ENSGT00940000157513"/>
<dbReference type="InParanoid" id="P16905"/>
<dbReference type="OrthoDB" id="417078at2759"/>
<dbReference type="PhylomeDB" id="P16905"/>
<dbReference type="Reactome" id="R-DME-163615">
    <property type="pathway name" value="PKA activation"/>
</dbReference>
<dbReference type="Reactome" id="R-DME-164378">
    <property type="pathway name" value="PKA activation in glucagon signalling"/>
</dbReference>
<dbReference type="Reactome" id="R-DME-180024">
    <property type="pathway name" value="DARPP-32 events"/>
</dbReference>
<dbReference type="Reactome" id="R-DME-432040">
    <property type="pathway name" value="Vasopressin regulates renal water homeostasis via Aquaporins"/>
</dbReference>
<dbReference type="Reactome" id="R-DME-442720">
    <property type="pathway name" value="CREB1 phosphorylation through the activation of Adenylate Cyclase"/>
</dbReference>
<dbReference type="Reactome" id="R-DME-5610787">
    <property type="pathway name" value="Hedgehog 'off' state"/>
</dbReference>
<dbReference type="Reactome" id="R-DME-9634597">
    <property type="pathway name" value="GPER1 signaling"/>
</dbReference>
<dbReference type="Reactome" id="R-DME-983231">
    <property type="pathway name" value="Factors involved in megakaryocyte development and platelet production"/>
</dbReference>
<dbReference type="Reactome" id="R-DME-9856530">
    <property type="pathway name" value="High laminar flow shear stress activates signaling by PIEZO1 and PECAM1:CDH5:KDR in endothelial cells"/>
</dbReference>
<dbReference type="BioGRID-ORCS" id="40305">
    <property type="hits" value="0 hits in 3 CRISPR screens"/>
</dbReference>
<dbReference type="ChiTaRS" id="Pka-R1">
    <property type="organism name" value="fly"/>
</dbReference>
<dbReference type="GenomeRNAi" id="40305"/>
<dbReference type="PRO" id="PR:P16905"/>
<dbReference type="Proteomes" id="UP000000803">
    <property type="component" value="Chromosome 3L"/>
</dbReference>
<dbReference type="Bgee" id="FBgn0259243">
    <property type="expression patterns" value="Expressed in adult oenocyte (Drosophila) in adult thorax and 279 other cell types or tissues"/>
</dbReference>
<dbReference type="ExpressionAtlas" id="P16905">
    <property type="expression patterns" value="baseline and differential"/>
</dbReference>
<dbReference type="GO" id="GO:0005952">
    <property type="term" value="C:cAMP-dependent protein kinase complex"/>
    <property type="evidence" value="ECO:0000318"/>
    <property type="project" value="GO_Central"/>
</dbReference>
<dbReference type="GO" id="GO:0005737">
    <property type="term" value="C:cytoplasm"/>
    <property type="evidence" value="ECO:0007005"/>
    <property type="project" value="FlyBase"/>
</dbReference>
<dbReference type="GO" id="GO:0005829">
    <property type="term" value="C:cytosol"/>
    <property type="evidence" value="ECO:0000318"/>
    <property type="project" value="GO_Central"/>
</dbReference>
<dbReference type="GO" id="GO:0045202">
    <property type="term" value="C:synapse"/>
    <property type="evidence" value="ECO:0007669"/>
    <property type="project" value="GOC"/>
</dbReference>
<dbReference type="GO" id="GO:0030552">
    <property type="term" value="F:cAMP binding"/>
    <property type="evidence" value="ECO:0000318"/>
    <property type="project" value="GO_Central"/>
</dbReference>
<dbReference type="GO" id="GO:0004862">
    <property type="term" value="F:cAMP-dependent protein kinase inhibitor activity"/>
    <property type="evidence" value="ECO:0000318"/>
    <property type="project" value="GO_Central"/>
</dbReference>
<dbReference type="GO" id="GO:0008603">
    <property type="term" value="F:cAMP-dependent protein kinase regulator activity"/>
    <property type="evidence" value="ECO:0000315"/>
    <property type="project" value="FlyBase"/>
</dbReference>
<dbReference type="GO" id="GO:0034236">
    <property type="term" value="F:protein kinase A catalytic subunit binding"/>
    <property type="evidence" value="ECO:0000318"/>
    <property type="project" value="GO_Central"/>
</dbReference>
<dbReference type="GO" id="GO:0007015">
    <property type="term" value="P:actin filament organization"/>
    <property type="evidence" value="ECO:0000315"/>
    <property type="project" value="FlyBase"/>
</dbReference>
<dbReference type="GO" id="GO:0007189">
    <property type="term" value="P:adenylate cyclase-activating G protein-coupled receptor signaling pathway"/>
    <property type="evidence" value="ECO:0000318"/>
    <property type="project" value="GO_Central"/>
</dbReference>
<dbReference type="GO" id="GO:0019933">
    <property type="term" value="P:cAMP-mediated signaling"/>
    <property type="evidence" value="ECO:0000303"/>
    <property type="project" value="FlyBase"/>
</dbReference>
<dbReference type="GO" id="GO:0007591">
    <property type="term" value="P:molting cycle, chitin-based cuticle"/>
    <property type="evidence" value="ECO:0000315"/>
    <property type="project" value="FlyBase"/>
</dbReference>
<dbReference type="GO" id="GO:0045879">
    <property type="term" value="P:negative regulation of smoothened signaling pathway"/>
    <property type="evidence" value="ECO:0000315"/>
    <property type="project" value="FlyBase"/>
</dbReference>
<dbReference type="GO" id="GO:0007274">
    <property type="term" value="P:neuromuscular synaptic transmission"/>
    <property type="evidence" value="ECO:0000315"/>
    <property type="project" value="FlyBase"/>
</dbReference>
<dbReference type="GO" id="GO:0008355">
    <property type="term" value="P:olfactory learning"/>
    <property type="evidence" value="ECO:0000315"/>
    <property type="project" value="FlyBase"/>
</dbReference>
<dbReference type="GO" id="GO:0008103">
    <property type="term" value="P:oocyte microtubule cytoskeleton polarization"/>
    <property type="evidence" value="ECO:0000315"/>
    <property type="project" value="FlyBase"/>
</dbReference>
<dbReference type="GO" id="GO:2000253">
    <property type="term" value="P:positive regulation of feeding behavior"/>
    <property type="evidence" value="ECO:0000315"/>
    <property type="project" value="FlyBase"/>
</dbReference>
<dbReference type="GO" id="GO:0045880">
    <property type="term" value="P:positive regulation of smoothened signaling pathway"/>
    <property type="evidence" value="ECO:0000315"/>
    <property type="project" value="FlyBase"/>
</dbReference>
<dbReference type="GO" id="GO:0045471">
    <property type="term" value="P:response to ethanol"/>
    <property type="evidence" value="ECO:0000314"/>
    <property type="project" value="FlyBase"/>
</dbReference>
<dbReference type="GO" id="GO:0007283">
    <property type="term" value="P:spermatogenesis"/>
    <property type="evidence" value="ECO:0000315"/>
    <property type="project" value="FlyBase"/>
</dbReference>
<dbReference type="GO" id="GO:0007419">
    <property type="term" value="P:ventral cord development"/>
    <property type="evidence" value="ECO:0007001"/>
    <property type="project" value="FlyBase"/>
</dbReference>
<dbReference type="CDD" id="cd00038">
    <property type="entry name" value="CAP_ED"/>
    <property type="match status" value="2"/>
</dbReference>
<dbReference type="CDD" id="cd12097">
    <property type="entry name" value="DD_RI_PKA"/>
    <property type="match status" value="1"/>
</dbReference>
<dbReference type="FunFam" id="1.20.890.10:FF:000013">
    <property type="entry name" value="cAMP-dependent protein kinase type I regulatory subunit"/>
    <property type="match status" value="1"/>
</dbReference>
<dbReference type="FunFam" id="2.60.120.10:FF:000013">
    <property type="entry name" value="cAMP-dependent protein kinase type I regulatory subunit"/>
    <property type="match status" value="1"/>
</dbReference>
<dbReference type="FunFam" id="2.60.120.10:FF:000006">
    <property type="entry name" value="cAMP-dependent protein kinase type I-alpha regulatory subunit"/>
    <property type="match status" value="1"/>
</dbReference>
<dbReference type="Gene3D" id="1.20.890.10">
    <property type="entry name" value="cAMP-dependent protein kinase regulatory subunit, dimerization-anchoring domain"/>
    <property type="match status" value="1"/>
</dbReference>
<dbReference type="Gene3D" id="2.60.120.10">
    <property type="entry name" value="Jelly Rolls"/>
    <property type="match status" value="2"/>
</dbReference>
<dbReference type="InterPro" id="IPR050503">
    <property type="entry name" value="cAMP-dep_PK_reg_su-like"/>
</dbReference>
<dbReference type="InterPro" id="IPR012198">
    <property type="entry name" value="cAMP_dep_PK_reg_su"/>
</dbReference>
<dbReference type="InterPro" id="IPR003117">
    <property type="entry name" value="cAMP_dep_PK_reg_su_I/II_a/b"/>
</dbReference>
<dbReference type="InterPro" id="IPR018488">
    <property type="entry name" value="cNMP-bd_CS"/>
</dbReference>
<dbReference type="InterPro" id="IPR000595">
    <property type="entry name" value="cNMP-bd_dom"/>
</dbReference>
<dbReference type="InterPro" id="IPR018490">
    <property type="entry name" value="cNMP-bd_dom_sf"/>
</dbReference>
<dbReference type="InterPro" id="IPR014710">
    <property type="entry name" value="RmlC-like_jellyroll"/>
</dbReference>
<dbReference type="PANTHER" id="PTHR11635">
    <property type="entry name" value="CAMP-DEPENDENT PROTEIN KINASE REGULATORY CHAIN"/>
    <property type="match status" value="1"/>
</dbReference>
<dbReference type="PANTHER" id="PTHR11635:SF152">
    <property type="entry name" value="CAMP-DEPENDENT PROTEIN KINASE TYPE I REGULATORY SUBUNIT-RELATED"/>
    <property type="match status" value="1"/>
</dbReference>
<dbReference type="Pfam" id="PF00027">
    <property type="entry name" value="cNMP_binding"/>
    <property type="match status" value="2"/>
</dbReference>
<dbReference type="Pfam" id="PF02197">
    <property type="entry name" value="RIIa"/>
    <property type="match status" value="1"/>
</dbReference>
<dbReference type="PIRSF" id="PIRSF000548">
    <property type="entry name" value="PK_regulatory"/>
    <property type="match status" value="1"/>
</dbReference>
<dbReference type="PRINTS" id="PR00103">
    <property type="entry name" value="CAMPKINASE"/>
</dbReference>
<dbReference type="SMART" id="SM00100">
    <property type="entry name" value="cNMP"/>
    <property type="match status" value="2"/>
</dbReference>
<dbReference type="SMART" id="SM00394">
    <property type="entry name" value="RIIa"/>
    <property type="match status" value="1"/>
</dbReference>
<dbReference type="SUPFAM" id="SSF51206">
    <property type="entry name" value="cAMP-binding domain-like"/>
    <property type="match status" value="2"/>
</dbReference>
<dbReference type="SUPFAM" id="SSF47391">
    <property type="entry name" value="Dimerization-anchoring domain of cAMP-dependent PK regulatory subunit"/>
    <property type="match status" value="1"/>
</dbReference>
<dbReference type="PROSITE" id="PS00888">
    <property type="entry name" value="CNMP_BINDING_1"/>
    <property type="match status" value="2"/>
</dbReference>
<dbReference type="PROSITE" id="PS00889">
    <property type="entry name" value="CNMP_BINDING_2"/>
    <property type="match status" value="2"/>
</dbReference>
<dbReference type="PROSITE" id="PS50042">
    <property type="entry name" value="CNMP_BINDING_3"/>
    <property type="match status" value="2"/>
</dbReference>